<accession>O06983</accession>
<accession>Q795G4</accession>
<name>YVDA_BACSU</name>
<sequence>MNQMVSLTSILEHNQRFVSEKKYEPYKTTKFPSKKLVIVTCMDTRLTELLPQAMGLKNGDAKIVKNAGAIVSHPFGSVMRSILVAIYELQAEEVCIVGHHECGMSGLNASSILEKAKERGVEDSCLNLLTSAGLDLKTWLTGFHSVEESVSHSVNMIKNHPLLPKKVPVHGLVIHPETGKLDVVINGYETELINNHS</sequence>
<gene>
    <name type="primary">yvdA</name>
    <name type="ordered locus">BSU34670</name>
</gene>
<dbReference type="EC" id="4.2.1.1"/>
<dbReference type="EMBL" id="Z94043">
    <property type="protein sequence ID" value="CAB08067.1"/>
    <property type="molecule type" value="Genomic_DNA"/>
</dbReference>
<dbReference type="EMBL" id="AL009126">
    <property type="protein sequence ID" value="CAB15472.1"/>
    <property type="molecule type" value="Genomic_DNA"/>
</dbReference>
<dbReference type="PIR" id="A70033">
    <property type="entry name" value="A70033"/>
</dbReference>
<dbReference type="RefSeq" id="NP_391347.1">
    <property type="nucleotide sequence ID" value="NC_000964.3"/>
</dbReference>
<dbReference type="RefSeq" id="WP_010886620.1">
    <property type="nucleotide sequence ID" value="NZ_OZ025638.1"/>
</dbReference>
<dbReference type="SMR" id="O06983"/>
<dbReference type="FunCoup" id="O06983">
    <property type="interactions" value="113"/>
</dbReference>
<dbReference type="STRING" id="224308.BSU34670"/>
<dbReference type="PaxDb" id="224308-BSU34670"/>
<dbReference type="EnsemblBacteria" id="CAB15472">
    <property type="protein sequence ID" value="CAB15472"/>
    <property type="gene ID" value="BSU_34670"/>
</dbReference>
<dbReference type="GeneID" id="937999"/>
<dbReference type="KEGG" id="bsu:BSU34670"/>
<dbReference type="PATRIC" id="fig|224308.43.peg.3631"/>
<dbReference type="eggNOG" id="COG0288">
    <property type="taxonomic scope" value="Bacteria"/>
</dbReference>
<dbReference type="InParanoid" id="O06983"/>
<dbReference type="OrthoDB" id="9792260at2"/>
<dbReference type="PhylomeDB" id="O06983"/>
<dbReference type="BioCyc" id="BSUB:BSU34670-MONOMER"/>
<dbReference type="Proteomes" id="UP000001570">
    <property type="component" value="Chromosome"/>
</dbReference>
<dbReference type="GO" id="GO:0004089">
    <property type="term" value="F:carbonate dehydratase activity"/>
    <property type="evidence" value="ECO:0007669"/>
    <property type="project" value="UniProtKB-EC"/>
</dbReference>
<dbReference type="GO" id="GO:0008270">
    <property type="term" value="F:zinc ion binding"/>
    <property type="evidence" value="ECO:0007669"/>
    <property type="project" value="InterPro"/>
</dbReference>
<dbReference type="CDD" id="cd03379">
    <property type="entry name" value="beta_CA_cladeD"/>
    <property type="match status" value="1"/>
</dbReference>
<dbReference type="Gene3D" id="3.40.1050.10">
    <property type="entry name" value="Carbonic anhydrase"/>
    <property type="match status" value="1"/>
</dbReference>
<dbReference type="InterPro" id="IPR001765">
    <property type="entry name" value="Carbonic_anhydrase"/>
</dbReference>
<dbReference type="InterPro" id="IPR036874">
    <property type="entry name" value="Carbonic_anhydrase_sf"/>
</dbReference>
<dbReference type="PANTHER" id="PTHR43175:SF3">
    <property type="entry name" value="CARBON DISULFIDE HYDROLASE"/>
    <property type="match status" value="1"/>
</dbReference>
<dbReference type="PANTHER" id="PTHR43175">
    <property type="entry name" value="CARBONIC ANHYDRASE"/>
    <property type="match status" value="1"/>
</dbReference>
<dbReference type="Pfam" id="PF00484">
    <property type="entry name" value="Pro_CA"/>
    <property type="match status" value="1"/>
</dbReference>
<dbReference type="SMART" id="SM00947">
    <property type="entry name" value="Pro_CA"/>
    <property type="match status" value="1"/>
</dbReference>
<dbReference type="SUPFAM" id="SSF53056">
    <property type="entry name" value="beta-carbonic anhydrase, cab"/>
    <property type="match status" value="1"/>
</dbReference>
<comment type="function">
    <text evidence="1">Reversible hydration of carbon dioxide.</text>
</comment>
<comment type="catalytic activity">
    <reaction>
        <text>hydrogencarbonate + H(+) = CO2 + H2O</text>
        <dbReference type="Rhea" id="RHEA:10748"/>
        <dbReference type="ChEBI" id="CHEBI:15377"/>
        <dbReference type="ChEBI" id="CHEBI:15378"/>
        <dbReference type="ChEBI" id="CHEBI:16526"/>
        <dbReference type="ChEBI" id="CHEBI:17544"/>
        <dbReference type="EC" id="4.2.1.1"/>
    </reaction>
</comment>
<comment type="cofactor">
    <cofactor evidence="1">
        <name>Zn(2+)</name>
        <dbReference type="ChEBI" id="CHEBI:29105"/>
    </cofactor>
    <text evidence="1">Binds 1 zinc ion per subunit.</text>
</comment>
<comment type="similarity">
    <text evidence="2">Belongs to the beta-class carbonic anhydrase family.</text>
</comment>
<reference key="1">
    <citation type="submission" date="1997-04" db="EMBL/GenBank/DDBJ databases">
        <authorList>
            <person name="Denizot F."/>
        </authorList>
    </citation>
    <scope>NUCLEOTIDE SEQUENCE [GENOMIC DNA]</scope>
</reference>
<reference key="2">
    <citation type="journal article" date="1997" name="Nature">
        <title>The complete genome sequence of the Gram-positive bacterium Bacillus subtilis.</title>
        <authorList>
            <person name="Kunst F."/>
            <person name="Ogasawara N."/>
            <person name="Moszer I."/>
            <person name="Albertini A.M."/>
            <person name="Alloni G."/>
            <person name="Azevedo V."/>
            <person name="Bertero M.G."/>
            <person name="Bessieres P."/>
            <person name="Bolotin A."/>
            <person name="Borchert S."/>
            <person name="Borriss R."/>
            <person name="Boursier L."/>
            <person name="Brans A."/>
            <person name="Braun M."/>
            <person name="Brignell S.C."/>
            <person name="Bron S."/>
            <person name="Brouillet S."/>
            <person name="Bruschi C.V."/>
            <person name="Caldwell B."/>
            <person name="Capuano V."/>
            <person name="Carter N.M."/>
            <person name="Choi S.-K."/>
            <person name="Codani J.-J."/>
            <person name="Connerton I.F."/>
            <person name="Cummings N.J."/>
            <person name="Daniel R.A."/>
            <person name="Denizot F."/>
            <person name="Devine K.M."/>
            <person name="Duesterhoeft A."/>
            <person name="Ehrlich S.D."/>
            <person name="Emmerson P.T."/>
            <person name="Entian K.-D."/>
            <person name="Errington J."/>
            <person name="Fabret C."/>
            <person name="Ferrari E."/>
            <person name="Foulger D."/>
            <person name="Fritz C."/>
            <person name="Fujita M."/>
            <person name="Fujita Y."/>
            <person name="Fuma S."/>
            <person name="Galizzi A."/>
            <person name="Galleron N."/>
            <person name="Ghim S.-Y."/>
            <person name="Glaser P."/>
            <person name="Goffeau A."/>
            <person name="Golightly E.J."/>
            <person name="Grandi G."/>
            <person name="Guiseppi G."/>
            <person name="Guy B.J."/>
            <person name="Haga K."/>
            <person name="Haiech J."/>
            <person name="Harwood C.R."/>
            <person name="Henaut A."/>
            <person name="Hilbert H."/>
            <person name="Holsappel S."/>
            <person name="Hosono S."/>
            <person name="Hullo M.-F."/>
            <person name="Itaya M."/>
            <person name="Jones L.-M."/>
            <person name="Joris B."/>
            <person name="Karamata D."/>
            <person name="Kasahara Y."/>
            <person name="Klaerr-Blanchard M."/>
            <person name="Klein C."/>
            <person name="Kobayashi Y."/>
            <person name="Koetter P."/>
            <person name="Koningstein G."/>
            <person name="Krogh S."/>
            <person name="Kumano M."/>
            <person name="Kurita K."/>
            <person name="Lapidus A."/>
            <person name="Lardinois S."/>
            <person name="Lauber J."/>
            <person name="Lazarevic V."/>
            <person name="Lee S.-M."/>
            <person name="Levine A."/>
            <person name="Liu H."/>
            <person name="Masuda S."/>
            <person name="Mauel C."/>
            <person name="Medigue C."/>
            <person name="Medina N."/>
            <person name="Mellado R.P."/>
            <person name="Mizuno M."/>
            <person name="Moestl D."/>
            <person name="Nakai S."/>
            <person name="Noback M."/>
            <person name="Noone D."/>
            <person name="O'Reilly M."/>
            <person name="Ogawa K."/>
            <person name="Ogiwara A."/>
            <person name="Oudega B."/>
            <person name="Park S.-H."/>
            <person name="Parro V."/>
            <person name="Pohl T.M."/>
            <person name="Portetelle D."/>
            <person name="Porwollik S."/>
            <person name="Prescott A.M."/>
            <person name="Presecan E."/>
            <person name="Pujic P."/>
            <person name="Purnelle B."/>
            <person name="Rapoport G."/>
            <person name="Rey M."/>
            <person name="Reynolds S."/>
            <person name="Rieger M."/>
            <person name="Rivolta C."/>
            <person name="Rocha E."/>
            <person name="Roche B."/>
            <person name="Rose M."/>
            <person name="Sadaie Y."/>
            <person name="Sato T."/>
            <person name="Scanlan E."/>
            <person name="Schleich S."/>
            <person name="Schroeter R."/>
            <person name="Scoffone F."/>
            <person name="Sekiguchi J."/>
            <person name="Sekowska A."/>
            <person name="Seror S.J."/>
            <person name="Serror P."/>
            <person name="Shin B.-S."/>
            <person name="Soldo B."/>
            <person name="Sorokin A."/>
            <person name="Tacconi E."/>
            <person name="Takagi T."/>
            <person name="Takahashi H."/>
            <person name="Takemaru K."/>
            <person name="Takeuchi M."/>
            <person name="Tamakoshi A."/>
            <person name="Tanaka T."/>
            <person name="Terpstra P."/>
            <person name="Tognoni A."/>
            <person name="Tosato V."/>
            <person name="Uchiyama S."/>
            <person name="Vandenbol M."/>
            <person name="Vannier F."/>
            <person name="Vassarotti A."/>
            <person name="Viari A."/>
            <person name="Wambutt R."/>
            <person name="Wedler E."/>
            <person name="Wedler H."/>
            <person name="Weitzenegger T."/>
            <person name="Winters P."/>
            <person name="Wipat A."/>
            <person name="Yamamoto H."/>
            <person name="Yamane K."/>
            <person name="Yasumoto K."/>
            <person name="Yata K."/>
            <person name="Yoshida K."/>
            <person name="Yoshikawa H.-F."/>
            <person name="Zumstein E."/>
            <person name="Yoshikawa H."/>
            <person name="Danchin A."/>
        </authorList>
    </citation>
    <scope>NUCLEOTIDE SEQUENCE [LARGE SCALE GENOMIC DNA]</scope>
    <source>
        <strain>168</strain>
    </source>
</reference>
<keyword id="KW-0456">Lyase</keyword>
<keyword id="KW-0479">Metal-binding</keyword>
<keyword id="KW-1185">Reference proteome</keyword>
<keyword id="KW-0862">Zinc</keyword>
<organism>
    <name type="scientific">Bacillus subtilis (strain 168)</name>
    <dbReference type="NCBI Taxonomy" id="224308"/>
    <lineage>
        <taxon>Bacteria</taxon>
        <taxon>Bacillati</taxon>
        <taxon>Bacillota</taxon>
        <taxon>Bacilli</taxon>
        <taxon>Bacillales</taxon>
        <taxon>Bacillaceae</taxon>
        <taxon>Bacillus</taxon>
    </lineage>
</organism>
<evidence type="ECO:0000250" key="1"/>
<evidence type="ECO:0000305" key="2"/>
<protein>
    <recommendedName>
        <fullName>Putative carbonic anhydrase YvdA</fullName>
        <ecNumber>4.2.1.1</ecNumber>
    </recommendedName>
    <alternativeName>
        <fullName>Carbonate dehydratase</fullName>
    </alternativeName>
</protein>
<proteinExistence type="inferred from homology"/>
<feature type="chain" id="PRO_0000388360" description="Putative carbonic anhydrase YvdA">
    <location>
        <begin position="1"/>
        <end position="197"/>
    </location>
</feature>
<feature type="binding site" evidence="1">
    <location>
        <position position="41"/>
    </location>
    <ligand>
        <name>Zn(2+)</name>
        <dbReference type="ChEBI" id="CHEBI:29105"/>
    </ligand>
</feature>
<feature type="binding site" evidence="1">
    <location>
        <position position="43"/>
    </location>
    <ligand>
        <name>Zn(2+)</name>
        <dbReference type="ChEBI" id="CHEBI:29105"/>
    </ligand>
</feature>
<feature type="binding site" evidence="1">
    <location>
        <position position="99"/>
    </location>
    <ligand>
        <name>Zn(2+)</name>
        <dbReference type="ChEBI" id="CHEBI:29105"/>
    </ligand>
</feature>
<feature type="binding site" evidence="1">
    <location>
        <position position="102"/>
    </location>
    <ligand>
        <name>Zn(2+)</name>
        <dbReference type="ChEBI" id="CHEBI:29105"/>
    </ligand>
</feature>